<protein>
    <recommendedName>
        <fullName evidence="1">Small ribosomal subunit protein uS15</fullName>
    </recommendedName>
    <alternativeName>
        <fullName evidence="2">30S ribosomal protein S15</fullName>
    </alternativeName>
</protein>
<feature type="chain" id="PRO_1000086800" description="Small ribosomal subunit protein uS15">
    <location>
        <begin position="1"/>
        <end position="89"/>
    </location>
</feature>
<sequence>MSLSTEATAKIVSEFGRDANDTGSTEVQVALLTAQINHLQGHFAEHKKDHHSRRGLLRMVSQRRKLLDYLKRKDVARYTQLIERLGLRR</sequence>
<name>RS15_ECOLC</name>
<reference key="1">
    <citation type="submission" date="2008-02" db="EMBL/GenBank/DDBJ databases">
        <title>Complete sequence of Escherichia coli C str. ATCC 8739.</title>
        <authorList>
            <person name="Copeland A."/>
            <person name="Lucas S."/>
            <person name="Lapidus A."/>
            <person name="Glavina del Rio T."/>
            <person name="Dalin E."/>
            <person name="Tice H."/>
            <person name="Bruce D."/>
            <person name="Goodwin L."/>
            <person name="Pitluck S."/>
            <person name="Kiss H."/>
            <person name="Brettin T."/>
            <person name="Detter J.C."/>
            <person name="Han C."/>
            <person name="Kuske C.R."/>
            <person name="Schmutz J."/>
            <person name="Larimer F."/>
            <person name="Land M."/>
            <person name="Hauser L."/>
            <person name="Kyrpides N."/>
            <person name="Mikhailova N."/>
            <person name="Ingram L."/>
            <person name="Richardson P."/>
        </authorList>
    </citation>
    <scope>NUCLEOTIDE SEQUENCE [LARGE SCALE GENOMIC DNA]</scope>
    <source>
        <strain>ATCC 8739 / DSM 1576 / NBRC 3972 / NCIMB 8545 / WDCM 00012 / Crooks</strain>
    </source>
</reference>
<dbReference type="EMBL" id="CP000946">
    <property type="protein sequence ID" value="ACA76210.1"/>
    <property type="molecule type" value="Genomic_DNA"/>
</dbReference>
<dbReference type="RefSeq" id="WP_000059466.1">
    <property type="nucleotide sequence ID" value="NZ_MTFT01000027.1"/>
</dbReference>
<dbReference type="SMR" id="B1IQV6"/>
<dbReference type="GeneID" id="93778818"/>
<dbReference type="KEGG" id="ecl:EcolC_0533"/>
<dbReference type="HOGENOM" id="CLU_148518_0_0_6"/>
<dbReference type="GO" id="GO:0022627">
    <property type="term" value="C:cytosolic small ribosomal subunit"/>
    <property type="evidence" value="ECO:0007669"/>
    <property type="project" value="TreeGrafter"/>
</dbReference>
<dbReference type="GO" id="GO:0019843">
    <property type="term" value="F:rRNA binding"/>
    <property type="evidence" value="ECO:0007669"/>
    <property type="project" value="UniProtKB-UniRule"/>
</dbReference>
<dbReference type="GO" id="GO:0003735">
    <property type="term" value="F:structural constituent of ribosome"/>
    <property type="evidence" value="ECO:0007669"/>
    <property type="project" value="InterPro"/>
</dbReference>
<dbReference type="GO" id="GO:0006412">
    <property type="term" value="P:translation"/>
    <property type="evidence" value="ECO:0007669"/>
    <property type="project" value="UniProtKB-UniRule"/>
</dbReference>
<dbReference type="CDD" id="cd00353">
    <property type="entry name" value="Ribosomal_S15p_S13e"/>
    <property type="match status" value="1"/>
</dbReference>
<dbReference type="FunFam" id="1.10.287.10:FF:000002">
    <property type="entry name" value="30S ribosomal protein S15"/>
    <property type="match status" value="1"/>
</dbReference>
<dbReference type="Gene3D" id="6.10.250.3130">
    <property type="match status" value="1"/>
</dbReference>
<dbReference type="Gene3D" id="1.10.287.10">
    <property type="entry name" value="S15/NS1, RNA-binding"/>
    <property type="match status" value="1"/>
</dbReference>
<dbReference type="HAMAP" id="MF_01343_B">
    <property type="entry name" value="Ribosomal_uS15_B"/>
    <property type="match status" value="1"/>
</dbReference>
<dbReference type="InterPro" id="IPR000589">
    <property type="entry name" value="Ribosomal_uS15"/>
</dbReference>
<dbReference type="InterPro" id="IPR005290">
    <property type="entry name" value="Ribosomal_uS15_bac-type"/>
</dbReference>
<dbReference type="InterPro" id="IPR009068">
    <property type="entry name" value="uS15_NS1_RNA-bd_sf"/>
</dbReference>
<dbReference type="NCBIfam" id="TIGR00952">
    <property type="entry name" value="S15_bact"/>
    <property type="match status" value="1"/>
</dbReference>
<dbReference type="PANTHER" id="PTHR23321">
    <property type="entry name" value="RIBOSOMAL PROTEIN S15, BACTERIAL AND ORGANELLAR"/>
    <property type="match status" value="1"/>
</dbReference>
<dbReference type="PANTHER" id="PTHR23321:SF26">
    <property type="entry name" value="SMALL RIBOSOMAL SUBUNIT PROTEIN US15M"/>
    <property type="match status" value="1"/>
</dbReference>
<dbReference type="Pfam" id="PF00312">
    <property type="entry name" value="Ribosomal_S15"/>
    <property type="match status" value="1"/>
</dbReference>
<dbReference type="SMART" id="SM01387">
    <property type="entry name" value="Ribosomal_S15"/>
    <property type="match status" value="1"/>
</dbReference>
<dbReference type="SUPFAM" id="SSF47060">
    <property type="entry name" value="S15/NS1 RNA-binding domain"/>
    <property type="match status" value="1"/>
</dbReference>
<dbReference type="PROSITE" id="PS00362">
    <property type="entry name" value="RIBOSOMAL_S15"/>
    <property type="match status" value="1"/>
</dbReference>
<keyword id="KW-0687">Ribonucleoprotein</keyword>
<keyword id="KW-0689">Ribosomal protein</keyword>
<keyword id="KW-0694">RNA-binding</keyword>
<keyword id="KW-0699">rRNA-binding</keyword>
<comment type="function">
    <text evidence="1">One of the primary rRNA binding proteins, it binds directly to 16S rRNA where it helps nucleate assembly of the platform of the 30S subunit by binding and bridging several RNA helices of the 16S rRNA.</text>
</comment>
<comment type="function">
    <text evidence="1">Forms an intersubunit bridge (bridge B4) with the 23S rRNA of the 50S subunit in the ribosome.</text>
</comment>
<comment type="subunit">
    <text evidence="1">Part of the 30S ribosomal subunit. Forms a bridge to the 50S subunit in the 70S ribosome, contacting the 23S rRNA.</text>
</comment>
<comment type="similarity">
    <text evidence="1">Belongs to the universal ribosomal protein uS15 family.</text>
</comment>
<proteinExistence type="inferred from homology"/>
<organism>
    <name type="scientific">Escherichia coli (strain ATCC 8739 / DSM 1576 / NBRC 3972 / NCIMB 8545 / WDCM 00012 / Crooks)</name>
    <dbReference type="NCBI Taxonomy" id="481805"/>
    <lineage>
        <taxon>Bacteria</taxon>
        <taxon>Pseudomonadati</taxon>
        <taxon>Pseudomonadota</taxon>
        <taxon>Gammaproteobacteria</taxon>
        <taxon>Enterobacterales</taxon>
        <taxon>Enterobacteriaceae</taxon>
        <taxon>Escherichia</taxon>
    </lineage>
</organism>
<gene>
    <name evidence="1" type="primary">rpsO</name>
    <name type="ordered locus">EcolC_0533</name>
</gene>
<evidence type="ECO:0000255" key="1">
    <source>
        <dbReference type="HAMAP-Rule" id="MF_01343"/>
    </source>
</evidence>
<evidence type="ECO:0000305" key="2"/>
<accession>B1IQV6</accession>